<organism>
    <name type="scientific">Dicentrarchus labrax</name>
    <name type="common">European seabass</name>
    <name type="synonym">Morone labrax</name>
    <dbReference type="NCBI Taxonomy" id="13489"/>
    <lineage>
        <taxon>Eukaryota</taxon>
        <taxon>Metazoa</taxon>
        <taxon>Chordata</taxon>
        <taxon>Craniata</taxon>
        <taxon>Vertebrata</taxon>
        <taxon>Euteleostomi</taxon>
        <taxon>Actinopterygii</taxon>
        <taxon>Neopterygii</taxon>
        <taxon>Teleostei</taxon>
        <taxon>Neoteleostei</taxon>
        <taxon>Acanthomorphata</taxon>
        <taxon>Eupercaria</taxon>
        <taxon>Moronidae</taxon>
        <taxon>Dicentrarchus</taxon>
    </lineage>
</organism>
<accession>Q9PS27</accession>
<proteinExistence type="evidence at protein level"/>
<keyword id="KW-0158">Chromosome</keyword>
<keyword id="KW-0217">Developmental protein</keyword>
<keyword id="KW-0221">Differentiation</keyword>
<keyword id="KW-0903">Direct protein sequencing</keyword>
<keyword id="KW-0226">DNA condensation</keyword>
<keyword id="KW-0238">DNA-binding</keyword>
<keyword id="KW-0544">Nucleosome core</keyword>
<keyword id="KW-0539">Nucleus</keyword>
<keyword id="KW-1185">Reference proteome</keyword>
<keyword id="KW-0744">Spermatogenesis</keyword>
<feature type="peptide" id="PRO_0000044831" description="Protamine">
    <location>
        <begin position="1"/>
        <end position="34"/>
    </location>
</feature>
<feature type="region of interest" description="Disordered" evidence="1">
    <location>
        <begin position="1"/>
        <end position="34"/>
    </location>
</feature>
<reference key="1">
    <citation type="journal article" date="1993" name="J. Exp. Zool.">
        <title>Differences in chromatin condensation during spermiogenesis in two species of fish with distinct protamines.</title>
        <authorList>
            <person name="Saperas N."/>
            <person name="Ribes E."/>
            <person name="Buesa C."/>
            <person name="Garcia-Hegart F."/>
            <person name="Chiva M."/>
        </authorList>
    </citation>
    <scope>PROTEIN SEQUENCE</scope>
    <source>
        <tissue>Sperm</tissue>
    </source>
</reference>
<dbReference type="Proteomes" id="UP000694389">
    <property type="component" value="Unplaced"/>
</dbReference>
<dbReference type="GO" id="GO:0000786">
    <property type="term" value="C:nucleosome"/>
    <property type="evidence" value="ECO:0007669"/>
    <property type="project" value="UniProtKB-KW"/>
</dbReference>
<dbReference type="GO" id="GO:0005634">
    <property type="term" value="C:nucleus"/>
    <property type="evidence" value="ECO:0007669"/>
    <property type="project" value="UniProtKB-SubCell"/>
</dbReference>
<dbReference type="GO" id="GO:0003677">
    <property type="term" value="F:DNA binding"/>
    <property type="evidence" value="ECO:0007669"/>
    <property type="project" value="UniProtKB-KW"/>
</dbReference>
<dbReference type="GO" id="GO:0030154">
    <property type="term" value="P:cell differentiation"/>
    <property type="evidence" value="ECO:0007669"/>
    <property type="project" value="UniProtKB-KW"/>
</dbReference>
<dbReference type="GO" id="GO:0030261">
    <property type="term" value="P:chromosome condensation"/>
    <property type="evidence" value="ECO:0007669"/>
    <property type="project" value="UniProtKB-KW"/>
</dbReference>
<dbReference type="GO" id="GO:0007283">
    <property type="term" value="P:spermatogenesis"/>
    <property type="evidence" value="ECO:0007669"/>
    <property type="project" value="UniProtKB-KW"/>
</dbReference>
<sequence>PRRRRQASRPVRRRRRTRRSTAERRRRRVVRRRR</sequence>
<evidence type="ECO:0000256" key="1">
    <source>
        <dbReference type="SAM" id="MobiDB-lite"/>
    </source>
</evidence>
<comment type="function">
    <text>Protamines substitute for histones in the chromatin of sperm during the haploid phase of spermatogenesis. They compact sperm DNA into a highly condensed, stable and inactive complex.</text>
</comment>
<comment type="subcellular location">
    <subcellularLocation>
        <location>Nucleus</location>
    </subcellularLocation>
    <subcellularLocation>
        <location>Chromosome</location>
    </subcellularLocation>
</comment>
<comment type="tissue specificity">
    <text>Testis.</text>
</comment>
<protein>
    <recommendedName>
        <fullName>Protamine</fullName>
    </recommendedName>
</protein>
<name>PRT_DICLA</name>